<reference key="1">
    <citation type="journal article" date="2004" name="Environ. Microbiol.">
        <title>The genome of Desulfotalea psychrophila, a sulfate-reducing bacterium from permanently cold Arctic sediments.</title>
        <authorList>
            <person name="Rabus R."/>
            <person name="Ruepp A."/>
            <person name="Frickey T."/>
            <person name="Rattei T."/>
            <person name="Fartmann B."/>
            <person name="Stark M."/>
            <person name="Bauer M."/>
            <person name="Zibat A."/>
            <person name="Lombardot T."/>
            <person name="Becker I."/>
            <person name="Amann J."/>
            <person name="Gellner K."/>
            <person name="Teeling H."/>
            <person name="Leuschner W.D."/>
            <person name="Gloeckner F.-O."/>
            <person name="Lupas A.N."/>
            <person name="Amann R."/>
            <person name="Klenk H.-P."/>
        </authorList>
    </citation>
    <scope>NUCLEOTIDE SEQUENCE [LARGE SCALE GENOMIC DNA]</scope>
    <source>
        <strain>DSM 12343 / LSv54</strain>
    </source>
</reference>
<protein>
    <recommendedName>
        <fullName evidence="1">Phosphatidylglycerol--prolipoprotein diacylglyceryl transferase</fullName>
        <ecNumber evidence="1">2.5.1.145</ecNumber>
    </recommendedName>
</protein>
<gene>
    <name evidence="1" type="primary">lgt</name>
    <name type="ordered locus">DP0851</name>
</gene>
<accession>Q6APZ3</accession>
<dbReference type="EC" id="2.5.1.145" evidence="1"/>
<dbReference type="EMBL" id="CR522870">
    <property type="protein sequence ID" value="CAG35580.1"/>
    <property type="molecule type" value="Genomic_DNA"/>
</dbReference>
<dbReference type="RefSeq" id="WP_011188096.1">
    <property type="nucleotide sequence ID" value="NC_006138.1"/>
</dbReference>
<dbReference type="SMR" id="Q6APZ3"/>
<dbReference type="STRING" id="177439.DP0851"/>
<dbReference type="KEGG" id="dps:DP0851"/>
<dbReference type="eggNOG" id="COG0682">
    <property type="taxonomic scope" value="Bacteria"/>
</dbReference>
<dbReference type="HOGENOM" id="CLU_013386_1_0_7"/>
<dbReference type="OrthoDB" id="871140at2"/>
<dbReference type="UniPathway" id="UPA00664"/>
<dbReference type="Proteomes" id="UP000000602">
    <property type="component" value="Chromosome"/>
</dbReference>
<dbReference type="GO" id="GO:0005886">
    <property type="term" value="C:plasma membrane"/>
    <property type="evidence" value="ECO:0007669"/>
    <property type="project" value="UniProtKB-SubCell"/>
</dbReference>
<dbReference type="GO" id="GO:0008961">
    <property type="term" value="F:phosphatidylglycerol-prolipoprotein diacylglyceryl transferase activity"/>
    <property type="evidence" value="ECO:0007669"/>
    <property type="project" value="UniProtKB-UniRule"/>
</dbReference>
<dbReference type="GO" id="GO:0042158">
    <property type="term" value="P:lipoprotein biosynthetic process"/>
    <property type="evidence" value="ECO:0007669"/>
    <property type="project" value="UniProtKB-UniRule"/>
</dbReference>
<dbReference type="HAMAP" id="MF_01147">
    <property type="entry name" value="Lgt"/>
    <property type="match status" value="1"/>
</dbReference>
<dbReference type="InterPro" id="IPR001640">
    <property type="entry name" value="Lgt"/>
</dbReference>
<dbReference type="NCBIfam" id="TIGR00544">
    <property type="entry name" value="lgt"/>
    <property type="match status" value="1"/>
</dbReference>
<dbReference type="PANTHER" id="PTHR30589:SF0">
    <property type="entry name" value="PHOSPHATIDYLGLYCEROL--PROLIPOPROTEIN DIACYLGLYCERYL TRANSFERASE"/>
    <property type="match status" value="1"/>
</dbReference>
<dbReference type="PANTHER" id="PTHR30589">
    <property type="entry name" value="PROLIPOPROTEIN DIACYLGLYCERYL TRANSFERASE"/>
    <property type="match status" value="1"/>
</dbReference>
<dbReference type="Pfam" id="PF01790">
    <property type="entry name" value="LGT"/>
    <property type="match status" value="1"/>
</dbReference>
<evidence type="ECO:0000255" key="1">
    <source>
        <dbReference type="HAMAP-Rule" id="MF_01147"/>
    </source>
</evidence>
<name>LGT_DESPS</name>
<sequence length="272" mass="31016">MSYYTLPPIDPIIMSLGPISIRWYGLMYVIGFFATYFLVRQQIQRHQFTQLEKNFDNLNTVLILCVILGGRLGYVVFYNLSYYLQHPLEILATWHGGMSFHGACIALILGGLIFCKIKKIDFWATADVYVATIPIGLGLGRIGNLINGELYGRVTEQPWGIIFPNGGPLPRHASQLYESLLEGLILFIILWSLRNRPWKRNSLTPHGTILSLFLCLYGLFRIIIENFRQPDPQLGFIVAHITMGQLLSGAMILCGLTLWFWRIHQKKRATAL</sequence>
<comment type="function">
    <text evidence="1">Catalyzes the transfer of the diacylglyceryl group from phosphatidylglycerol to the sulfhydryl group of the N-terminal cysteine of a prolipoprotein, the first step in the formation of mature lipoproteins.</text>
</comment>
<comment type="catalytic activity">
    <reaction evidence="1">
        <text>L-cysteinyl-[prolipoprotein] + a 1,2-diacyl-sn-glycero-3-phospho-(1'-sn-glycerol) = an S-1,2-diacyl-sn-glyceryl-L-cysteinyl-[prolipoprotein] + sn-glycerol 1-phosphate + H(+)</text>
        <dbReference type="Rhea" id="RHEA:56712"/>
        <dbReference type="Rhea" id="RHEA-COMP:14679"/>
        <dbReference type="Rhea" id="RHEA-COMP:14680"/>
        <dbReference type="ChEBI" id="CHEBI:15378"/>
        <dbReference type="ChEBI" id="CHEBI:29950"/>
        <dbReference type="ChEBI" id="CHEBI:57685"/>
        <dbReference type="ChEBI" id="CHEBI:64716"/>
        <dbReference type="ChEBI" id="CHEBI:140658"/>
        <dbReference type="EC" id="2.5.1.145"/>
    </reaction>
</comment>
<comment type="pathway">
    <text evidence="1">Protein modification; lipoprotein biosynthesis (diacylglyceryl transfer).</text>
</comment>
<comment type="subcellular location">
    <subcellularLocation>
        <location evidence="1">Cell inner membrane</location>
        <topology evidence="1">Multi-pass membrane protein</topology>
    </subcellularLocation>
</comment>
<comment type="similarity">
    <text evidence="1">Belongs to the Lgt family.</text>
</comment>
<proteinExistence type="inferred from homology"/>
<keyword id="KW-0997">Cell inner membrane</keyword>
<keyword id="KW-1003">Cell membrane</keyword>
<keyword id="KW-0472">Membrane</keyword>
<keyword id="KW-1185">Reference proteome</keyword>
<keyword id="KW-0808">Transferase</keyword>
<keyword id="KW-0812">Transmembrane</keyword>
<keyword id="KW-1133">Transmembrane helix</keyword>
<feature type="chain" id="PRO_0000172594" description="Phosphatidylglycerol--prolipoprotein diacylglyceryl transferase">
    <location>
        <begin position="1"/>
        <end position="272"/>
    </location>
</feature>
<feature type="transmembrane region" description="Helical" evidence="1">
    <location>
        <begin position="19"/>
        <end position="39"/>
    </location>
</feature>
<feature type="transmembrane region" description="Helical" evidence="1">
    <location>
        <begin position="58"/>
        <end position="78"/>
    </location>
</feature>
<feature type="transmembrane region" description="Helical" evidence="1">
    <location>
        <begin position="94"/>
        <end position="114"/>
    </location>
</feature>
<feature type="transmembrane region" description="Helical" evidence="1">
    <location>
        <begin position="207"/>
        <end position="227"/>
    </location>
</feature>
<feature type="transmembrane region" description="Helical" evidence="1">
    <location>
        <begin position="234"/>
        <end position="254"/>
    </location>
</feature>
<feature type="binding site" evidence="1">
    <location>
        <position position="141"/>
    </location>
    <ligand>
        <name>a 1,2-diacyl-sn-glycero-3-phospho-(1'-sn-glycerol)</name>
        <dbReference type="ChEBI" id="CHEBI:64716"/>
    </ligand>
</feature>
<organism>
    <name type="scientific">Desulfotalea psychrophila (strain LSv54 / DSM 12343)</name>
    <dbReference type="NCBI Taxonomy" id="177439"/>
    <lineage>
        <taxon>Bacteria</taxon>
        <taxon>Pseudomonadati</taxon>
        <taxon>Thermodesulfobacteriota</taxon>
        <taxon>Desulfobulbia</taxon>
        <taxon>Desulfobulbales</taxon>
        <taxon>Desulfocapsaceae</taxon>
        <taxon>Desulfotalea</taxon>
    </lineage>
</organism>